<proteinExistence type="inferred from homology"/>
<evidence type="ECO:0000255" key="1">
    <source>
        <dbReference type="HAMAP-Rule" id="MF_00444"/>
    </source>
</evidence>
<feature type="chain" id="PRO_1000206146" description="ATP-dependent Clp protease proteolytic subunit">
    <location>
        <begin position="1"/>
        <end position="202"/>
    </location>
</feature>
<feature type="active site" description="Nucleophile" evidence="1">
    <location>
        <position position="98"/>
    </location>
</feature>
<feature type="active site" evidence="1">
    <location>
        <position position="123"/>
    </location>
</feature>
<dbReference type="EC" id="3.4.21.92" evidence="1"/>
<dbReference type="EMBL" id="CP001358">
    <property type="protein sequence ID" value="ACL48599.1"/>
    <property type="molecule type" value="Genomic_DNA"/>
</dbReference>
<dbReference type="SMR" id="B8IYM2"/>
<dbReference type="STRING" id="525146.Ddes_0691"/>
<dbReference type="MEROPS" id="S14.001"/>
<dbReference type="KEGG" id="dds:Ddes_0691"/>
<dbReference type="eggNOG" id="COG0740">
    <property type="taxonomic scope" value="Bacteria"/>
</dbReference>
<dbReference type="HOGENOM" id="CLU_058707_3_3_7"/>
<dbReference type="GO" id="GO:0005737">
    <property type="term" value="C:cytoplasm"/>
    <property type="evidence" value="ECO:0007669"/>
    <property type="project" value="UniProtKB-SubCell"/>
</dbReference>
<dbReference type="GO" id="GO:0009368">
    <property type="term" value="C:endopeptidase Clp complex"/>
    <property type="evidence" value="ECO:0007669"/>
    <property type="project" value="TreeGrafter"/>
</dbReference>
<dbReference type="GO" id="GO:0004176">
    <property type="term" value="F:ATP-dependent peptidase activity"/>
    <property type="evidence" value="ECO:0007669"/>
    <property type="project" value="InterPro"/>
</dbReference>
<dbReference type="GO" id="GO:0051117">
    <property type="term" value="F:ATPase binding"/>
    <property type="evidence" value="ECO:0007669"/>
    <property type="project" value="TreeGrafter"/>
</dbReference>
<dbReference type="GO" id="GO:0004252">
    <property type="term" value="F:serine-type endopeptidase activity"/>
    <property type="evidence" value="ECO:0007669"/>
    <property type="project" value="UniProtKB-UniRule"/>
</dbReference>
<dbReference type="GO" id="GO:0006515">
    <property type="term" value="P:protein quality control for misfolded or incompletely synthesized proteins"/>
    <property type="evidence" value="ECO:0007669"/>
    <property type="project" value="TreeGrafter"/>
</dbReference>
<dbReference type="CDD" id="cd07017">
    <property type="entry name" value="S14_ClpP_2"/>
    <property type="match status" value="1"/>
</dbReference>
<dbReference type="FunFam" id="3.90.226.10:FF:000001">
    <property type="entry name" value="ATP-dependent Clp protease proteolytic subunit"/>
    <property type="match status" value="1"/>
</dbReference>
<dbReference type="Gene3D" id="3.90.226.10">
    <property type="entry name" value="2-enoyl-CoA Hydratase, Chain A, domain 1"/>
    <property type="match status" value="1"/>
</dbReference>
<dbReference type="HAMAP" id="MF_00444">
    <property type="entry name" value="ClpP"/>
    <property type="match status" value="1"/>
</dbReference>
<dbReference type="InterPro" id="IPR001907">
    <property type="entry name" value="ClpP"/>
</dbReference>
<dbReference type="InterPro" id="IPR029045">
    <property type="entry name" value="ClpP/crotonase-like_dom_sf"/>
</dbReference>
<dbReference type="InterPro" id="IPR023562">
    <property type="entry name" value="ClpP/TepA"/>
</dbReference>
<dbReference type="InterPro" id="IPR033135">
    <property type="entry name" value="ClpP_His_AS"/>
</dbReference>
<dbReference type="InterPro" id="IPR018215">
    <property type="entry name" value="ClpP_Ser_AS"/>
</dbReference>
<dbReference type="NCBIfam" id="NF001368">
    <property type="entry name" value="PRK00277.1"/>
    <property type="match status" value="1"/>
</dbReference>
<dbReference type="NCBIfam" id="NF009205">
    <property type="entry name" value="PRK12553.1"/>
    <property type="match status" value="1"/>
</dbReference>
<dbReference type="PANTHER" id="PTHR10381">
    <property type="entry name" value="ATP-DEPENDENT CLP PROTEASE PROTEOLYTIC SUBUNIT"/>
    <property type="match status" value="1"/>
</dbReference>
<dbReference type="PANTHER" id="PTHR10381:SF11">
    <property type="entry name" value="ATP-DEPENDENT CLP PROTEASE PROTEOLYTIC SUBUNIT, MITOCHONDRIAL"/>
    <property type="match status" value="1"/>
</dbReference>
<dbReference type="Pfam" id="PF00574">
    <property type="entry name" value="CLP_protease"/>
    <property type="match status" value="1"/>
</dbReference>
<dbReference type="PRINTS" id="PR00127">
    <property type="entry name" value="CLPPROTEASEP"/>
</dbReference>
<dbReference type="SUPFAM" id="SSF52096">
    <property type="entry name" value="ClpP/crotonase"/>
    <property type="match status" value="1"/>
</dbReference>
<dbReference type="PROSITE" id="PS00382">
    <property type="entry name" value="CLP_PROTEASE_HIS"/>
    <property type="match status" value="1"/>
</dbReference>
<dbReference type="PROSITE" id="PS00381">
    <property type="entry name" value="CLP_PROTEASE_SER"/>
    <property type="match status" value="1"/>
</dbReference>
<sequence length="202" mass="22257">MSLIPMVIETTGRSERAYDIYSRLLKDRIVLLGSEVNDTVASLICAQLLFLESQDPEKEISLYINSPGGSVTAGLAIYDTLRFISAPVSTVCMGRAASMGAFLLAAGKPGLRYALPNSQIMIHQPSAGYQGQATDIEIHAKEVLRLKERLNRILAENTGRPYKDIVKATERDNFLTPEEAKDLGIIDRVLVSRQDMAQEKSE</sequence>
<reference key="1">
    <citation type="submission" date="2009-01" db="EMBL/GenBank/DDBJ databases">
        <title>Complete sequence of Desulfovibrio desulfuricans subsp. desulfuricans str. ATCC 27774.</title>
        <authorList>
            <consortium name="US DOE Joint Genome Institute"/>
            <person name="Lucas S."/>
            <person name="Copeland A."/>
            <person name="Lapidus A."/>
            <person name="Glavina del Rio T."/>
            <person name="Tice H."/>
            <person name="Bruce D."/>
            <person name="Goodwin L."/>
            <person name="Pitluck S."/>
            <person name="Sims D."/>
            <person name="Lu M."/>
            <person name="Kiss H."/>
            <person name="Meineke L."/>
            <person name="Brettin T."/>
            <person name="Detter J.C."/>
            <person name="Han C."/>
            <person name="Larimer F."/>
            <person name="Land M."/>
            <person name="Hauser L."/>
            <person name="Kyrpides N."/>
            <person name="Ovchinnikova G."/>
            <person name="Hazen T.C."/>
        </authorList>
    </citation>
    <scope>NUCLEOTIDE SEQUENCE [LARGE SCALE GENOMIC DNA]</scope>
    <source>
        <strain>ATCC 27774 / DSM 6949 / MB</strain>
    </source>
</reference>
<gene>
    <name evidence="1" type="primary">clpP</name>
    <name type="ordered locus">Ddes_0691</name>
</gene>
<protein>
    <recommendedName>
        <fullName evidence="1">ATP-dependent Clp protease proteolytic subunit</fullName>
        <ecNumber evidence="1">3.4.21.92</ecNumber>
    </recommendedName>
    <alternativeName>
        <fullName evidence="1">Endopeptidase Clp</fullName>
    </alternativeName>
</protein>
<accession>B8IYM2</accession>
<name>CLPP_DESDA</name>
<keyword id="KW-0963">Cytoplasm</keyword>
<keyword id="KW-0378">Hydrolase</keyword>
<keyword id="KW-0645">Protease</keyword>
<keyword id="KW-0720">Serine protease</keyword>
<comment type="function">
    <text evidence="1">Cleaves peptides in various proteins in a process that requires ATP hydrolysis. Has a chymotrypsin-like activity. Plays a major role in the degradation of misfolded proteins.</text>
</comment>
<comment type="catalytic activity">
    <reaction evidence="1">
        <text>Hydrolysis of proteins to small peptides in the presence of ATP and magnesium. alpha-casein is the usual test substrate. In the absence of ATP, only oligopeptides shorter than five residues are hydrolyzed (such as succinyl-Leu-Tyr-|-NHMec, and Leu-Tyr-Leu-|-Tyr-Trp, in which cleavage of the -Tyr-|-Leu- and -Tyr-|-Trp bonds also occurs).</text>
        <dbReference type="EC" id="3.4.21.92"/>
    </reaction>
</comment>
<comment type="subunit">
    <text evidence="1">Fourteen ClpP subunits assemble into 2 heptameric rings which stack back to back to give a disk-like structure with a central cavity, resembling the structure of eukaryotic proteasomes.</text>
</comment>
<comment type="subcellular location">
    <subcellularLocation>
        <location evidence="1">Cytoplasm</location>
    </subcellularLocation>
</comment>
<comment type="similarity">
    <text evidence="1">Belongs to the peptidase S14 family.</text>
</comment>
<organism>
    <name type="scientific">Desulfovibrio desulfuricans (strain ATCC 27774 / DSM 6949 / MB)</name>
    <dbReference type="NCBI Taxonomy" id="525146"/>
    <lineage>
        <taxon>Bacteria</taxon>
        <taxon>Pseudomonadati</taxon>
        <taxon>Thermodesulfobacteriota</taxon>
        <taxon>Desulfovibrionia</taxon>
        <taxon>Desulfovibrionales</taxon>
        <taxon>Desulfovibrionaceae</taxon>
        <taxon>Desulfovibrio</taxon>
    </lineage>
</organism>